<keyword id="KW-0687">Ribonucleoprotein</keyword>
<keyword id="KW-0689">Ribosomal protein</keyword>
<dbReference type="EMBL" id="CP001019">
    <property type="protein sequence ID" value="ACJ18085.1"/>
    <property type="molecule type" value="Genomic_DNA"/>
</dbReference>
<dbReference type="RefSeq" id="WP_005770936.1">
    <property type="nucleotide sequence ID" value="NC_011527.1"/>
</dbReference>
<dbReference type="SMR" id="B6IZF7"/>
<dbReference type="KEGG" id="cbg:CbuG_0683"/>
<dbReference type="HOGENOM" id="CLU_169643_1_1_6"/>
<dbReference type="GO" id="GO:0022625">
    <property type="term" value="C:cytosolic large ribosomal subunit"/>
    <property type="evidence" value="ECO:0007669"/>
    <property type="project" value="TreeGrafter"/>
</dbReference>
<dbReference type="GO" id="GO:0003735">
    <property type="term" value="F:structural constituent of ribosome"/>
    <property type="evidence" value="ECO:0007669"/>
    <property type="project" value="InterPro"/>
</dbReference>
<dbReference type="GO" id="GO:0006412">
    <property type="term" value="P:translation"/>
    <property type="evidence" value="ECO:0007669"/>
    <property type="project" value="UniProtKB-UniRule"/>
</dbReference>
<dbReference type="FunFam" id="4.10.410.60:FF:000001">
    <property type="entry name" value="50S ribosomal protein L35"/>
    <property type="match status" value="1"/>
</dbReference>
<dbReference type="Gene3D" id="4.10.410.60">
    <property type="match status" value="1"/>
</dbReference>
<dbReference type="HAMAP" id="MF_00514">
    <property type="entry name" value="Ribosomal_bL35"/>
    <property type="match status" value="1"/>
</dbReference>
<dbReference type="InterPro" id="IPR001706">
    <property type="entry name" value="Ribosomal_bL35"/>
</dbReference>
<dbReference type="InterPro" id="IPR021137">
    <property type="entry name" value="Ribosomal_bL35-like"/>
</dbReference>
<dbReference type="InterPro" id="IPR018265">
    <property type="entry name" value="Ribosomal_bL35_CS"/>
</dbReference>
<dbReference type="InterPro" id="IPR037229">
    <property type="entry name" value="Ribosomal_bL35_sf"/>
</dbReference>
<dbReference type="NCBIfam" id="TIGR00001">
    <property type="entry name" value="rpmI_bact"/>
    <property type="match status" value="1"/>
</dbReference>
<dbReference type="PANTHER" id="PTHR33343">
    <property type="entry name" value="54S RIBOSOMAL PROTEIN BL35M"/>
    <property type="match status" value="1"/>
</dbReference>
<dbReference type="PANTHER" id="PTHR33343:SF1">
    <property type="entry name" value="LARGE RIBOSOMAL SUBUNIT PROTEIN BL35M"/>
    <property type="match status" value="1"/>
</dbReference>
<dbReference type="Pfam" id="PF01632">
    <property type="entry name" value="Ribosomal_L35p"/>
    <property type="match status" value="1"/>
</dbReference>
<dbReference type="PRINTS" id="PR00064">
    <property type="entry name" value="RIBOSOMALL35"/>
</dbReference>
<dbReference type="SUPFAM" id="SSF143034">
    <property type="entry name" value="L35p-like"/>
    <property type="match status" value="1"/>
</dbReference>
<dbReference type="PROSITE" id="PS00936">
    <property type="entry name" value="RIBOSOMAL_L35"/>
    <property type="match status" value="1"/>
</dbReference>
<proteinExistence type="inferred from homology"/>
<evidence type="ECO:0000255" key="1">
    <source>
        <dbReference type="HAMAP-Rule" id="MF_00514"/>
    </source>
</evidence>
<evidence type="ECO:0000305" key="2"/>
<sequence length="64" mass="7393">MPKLKTNRGAVKRFKVTGSGKIKRAASNHNHILTKKSQKRKRRLRKIHEVAPSDMRAVSEMLRD</sequence>
<name>RL35_COXB2</name>
<reference key="1">
    <citation type="journal article" date="2009" name="Infect. Immun.">
        <title>Comparative genomics reveal extensive transposon-mediated genomic plasticity and diversity among potential effector proteins within the genus Coxiella.</title>
        <authorList>
            <person name="Beare P.A."/>
            <person name="Unsworth N."/>
            <person name="Andoh M."/>
            <person name="Voth D.E."/>
            <person name="Omsland A."/>
            <person name="Gilk S.D."/>
            <person name="Williams K.P."/>
            <person name="Sobral B.W."/>
            <person name="Kupko J.J. III"/>
            <person name="Porcella S.F."/>
            <person name="Samuel J.E."/>
            <person name="Heinzen R.A."/>
        </authorList>
    </citation>
    <scope>NUCLEOTIDE SEQUENCE [LARGE SCALE GENOMIC DNA]</scope>
    <source>
        <strain>CbuG_Q212</strain>
    </source>
</reference>
<organism>
    <name type="scientific">Coxiella burnetii (strain CbuG_Q212)</name>
    <name type="common">Coxiella burnetii (strain Q212)</name>
    <dbReference type="NCBI Taxonomy" id="434923"/>
    <lineage>
        <taxon>Bacteria</taxon>
        <taxon>Pseudomonadati</taxon>
        <taxon>Pseudomonadota</taxon>
        <taxon>Gammaproteobacteria</taxon>
        <taxon>Legionellales</taxon>
        <taxon>Coxiellaceae</taxon>
        <taxon>Coxiella</taxon>
    </lineage>
</organism>
<feature type="chain" id="PRO_1000127332" description="Large ribosomal subunit protein bL35">
    <location>
        <begin position="1"/>
        <end position="64"/>
    </location>
</feature>
<comment type="similarity">
    <text evidence="1">Belongs to the bacterial ribosomal protein bL35 family.</text>
</comment>
<protein>
    <recommendedName>
        <fullName evidence="1">Large ribosomal subunit protein bL35</fullName>
    </recommendedName>
    <alternativeName>
        <fullName evidence="2">50S ribosomal protein L35</fullName>
    </alternativeName>
</protein>
<accession>B6IZF7</accession>
<gene>
    <name evidence="1" type="primary">rpmI</name>
    <name type="ordered locus">CbuG_0683</name>
</gene>